<dbReference type="EC" id="2.7.14.1" evidence="1"/>
<dbReference type="EMBL" id="CP000227">
    <property type="protein sequence ID" value="ACM10609.1"/>
    <property type="molecule type" value="Genomic_DNA"/>
</dbReference>
<dbReference type="SMR" id="B9IZG5"/>
<dbReference type="KEGG" id="bcq:BCQ_0094"/>
<dbReference type="HOGENOM" id="CLU_066591_1_0_9"/>
<dbReference type="Proteomes" id="UP000000441">
    <property type="component" value="Chromosome"/>
</dbReference>
<dbReference type="GO" id="GO:0005615">
    <property type="term" value="C:extracellular space"/>
    <property type="evidence" value="ECO:0007669"/>
    <property type="project" value="TreeGrafter"/>
</dbReference>
<dbReference type="GO" id="GO:0005524">
    <property type="term" value="F:ATP binding"/>
    <property type="evidence" value="ECO:0007669"/>
    <property type="project" value="UniProtKB-KW"/>
</dbReference>
<dbReference type="GO" id="GO:0004111">
    <property type="term" value="F:creatine kinase activity"/>
    <property type="evidence" value="ECO:0007669"/>
    <property type="project" value="InterPro"/>
</dbReference>
<dbReference type="GO" id="GO:0004672">
    <property type="term" value="F:protein kinase activity"/>
    <property type="evidence" value="ECO:0007669"/>
    <property type="project" value="UniProtKB-UniRule"/>
</dbReference>
<dbReference type="GO" id="GO:0046314">
    <property type="term" value="P:phosphocreatine biosynthetic process"/>
    <property type="evidence" value="ECO:0007669"/>
    <property type="project" value="InterPro"/>
</dbReference>
<dbReference type="CDD" id="cd07930">
    <property type="entry name" value="bacterial_phosphagen_kinase"/>
    <property type="match status" value="1"/>
</dbReference>
<dbReference type="FunFam" id="3.30.590.10:FF:000007">
    <property type="entry name" value="Protein-arginine kinase"/>
    <property type="match status" value="1"/>
</dbReference>
<dbReference type="Gene3D" id="3.30.590.10">
    <property type="entry name" value="Glutamine synthetase/guanido kinase, catalytic domain"/>
    <property type="match status" value="1"/>
</dbReference>
<dbReference type="HAMAP" id="MF_00602">
    <property type="entry name" value="Prot_Arg_kinase"/>
    <property type="match status" value="1"/>
</dbReference>
<dbReference type="InterPro" id="IPR023660">
    <property type="entry name" value="Arg_Kinase"/>
</dbReference>
<dbReference type="InterPro" id="IPR000749">
    <property type="entry name" value="ATP-guanido_PTrfase"/>
</dbReference>
<dbReference type="InterPro" id="IPR022415">
    <property type="entry name" value="ATP-guanido_PTrfase_AS"/>
</dbReference>
<dbReference type="InterPro" id="IPR022414">
    <property type="entry name" value="ATP-guanido_PTrfase_cat"/>
</dbReference>
<dbReference type="InterPro" id="IPR014746">
    <property type="entry name" value="Gln_synth/guanido_kin_cat_dom"/>
</dbReference>
<dbReference type="NCBIfam" id="NF002194">
    <property type="entry name" value="PRK01059.1-4"/>
    <property type="match status" value="1"/>
</dbReference>
<dbReference type="NCBIfam" id="NF002195">
    <property type="entry name" value="PRK01059.1-5"/>
    <property type="match status" value="1"/>
</dbReference>
<dbReference type="PANTHER" id="PTHR11547:SF38">
    <property type="entry name" value="ARGININE KINASE 1-RELATED"/>
    <property type="match status" value="1"/>
</dbReference>
<dbReference type="PANTHER" id="PTHR11547">
    <property type="entry name" value="ARGININE OR CREATINE KINASE"/>
    <property type="match status" value="1"/>
</dbReference>
<dbReference type="Pfam" id="PF00217">
    <property type="entry name" value="ATP-gua_Ptrans"/>
    <property type="match status" value="1"/>
</dbReference>
<dbReference type="SUPFAM" id="SSF55931">
    <property type="entry name" value="Glutamine synthetase/guanido kinase"/>
    <property type="match status" value="1"/>
</dbReference>
<dbReference type="PROSITE" id="PS00112">
    <property type="entry name" value="PHOSPHAGEN_KINASE"/>
    <property type="match status" value="1"/>
</dbReference>
<dbReference type="PROSITE" id="PS51510">
    <property type="entry name" value="PHOSPHAGEN_KINASE_C"/>
    <property type="match status" value="1"/>
</dbReference>
<gene>
    <name evidence="1" type="primary">mcsB</name>
    <name type="ordered locus">BCQ_0094</name>
</gene>
<organism>
    <name type="scientific">Bacillus cereus (strain Q1)</name>
    <dbReference type="NCBI Taxonomy" id="361100"/>
    <lineage>
        <taxon>Bacteria</taxon>
        <taxon>Bacillati</taxon>
        <taxon>Bacillota</taxon>
        <taxon>Bacilli</taxon>
        <taxon>Bacillales</taxon>
        <taxon>Bacillaceae</taxon>
        <taxon>Bacillus</taxon>
        <taxon>Bacillus cereus group</taxon>
    </lineage>
</organism>
<comment type="function">
    <text evidence="1">Catalyzes the specific phosphorylation of arginine residues in a large number of proteins. Is part of the bacterial stress response system. Protein arginine phosphorylation has a physiologically important role and is involved in the regulation of many critical cellular processes, such as protein homeostasis, motility, competence, and stringent and stress responses, by regulating gene expression and protein activity.</text>
</comment>
<comment type="catalytic activity">
    <reaction evidence="1">
        <text>L-arginyl-[protein] + ATP = N(omega)-phospho-L-arginyl-[protein] + ADP + H(+)</text>
        <dbReference type="Rhea" id="RHEA:43384"/>
        <dbReference type="Rhea" id="RHEA-COMP:10532"/>
        <dbReference type="Rhea" id="RHEA-COMP:10533"/>
        <dbReference type="ChEBI" id="CHEBI:15378"/>
        <dbReference type="ChEBI" id="CHEBI:29965"/>
        <dbReference type="ChEBI" id="CHEBI:30616"/>
        <dbReference type="ChEBI" id="CHEBI:83226"/>
        <dbReference type="ChEBI" id="CHEBI:456216"/>
        <dbReference type="EC" id="2.7.14.1"/>
    </reaction>
</comment>
<comment type="activity regulation">
    <text evidence="1">Appears to be allosterically activated by the binding of pArg-containing polypeptides to the pArg-binding pocket localized in the C-terminal domain of McsB.</text>
</comment>
<comment type="similarity">
    <text evidence="1">Belongs to the ATP:guanido phosphotransferase family.</text>
</comment>
<feature type="chain" id="PRO_1000147059" description="Protein-arginine kinase">
    <location>
        <begin position="1"/>
        <end position="354"/>
    </location>
</feature>
<feature type="domain" description="Phosphagen kinase C-terminal" evidence="1">
    <location>
        <begin position="24"/>
        <end position="254"/>
    </location>
</feature>
<feature type="short sequence motif" description="RDXXRA motif of the pArg binding pocket involved in allosteric regulation" evidence="1">
    <location>
        <begin position="337"/>
        <end position="342"/>
    </location>
</feature>
<feature type="binding site" evidence="1">
    <location>
        <begin position="27"/>
        <end position="31"/>
    </location>
    <ligand>
        <name>ATP</name>
        <dbReference type="ChEBI" id="CHEBI:30616"/>
    </ligand>
</feature>
<feature type="binding site" evidence="1">
    <location>
        <position position="92"/>
    </location>
    <ligand>
        <name>ATP</name>
        <dbReference type="ChEBI" id="CHEBI:30616"/>
    </ligand>
</feature>
<feature type="binding site" evidence="1">
    <location>
        <position position="125"/>
    </location>
    <ligand>
        <name>ATP</name>
        <dbReference type="ChEBI" id="CHEBI:30616"/>
    </ligand>
</feature>
<feature type="binding site" evidence="1">
    <location>
        <begin position="176"/>
        <end position="180"/>
    </location>
    <ligand>
        <name>ATP</name>
        <dbReference type="ChEBI" id="CHEBI:30616"/>
    </ligand>
</feature>
<feature type="binding site" evidence="1">
    <location>
        <begin position="207"/>
        <end position="212"/>
    </location>
    <ligand>
        <name>ATP</name>
        <dbReference type="ChEBI" id="CHEBI:30616"/>
    </ligand>
</feature>
<keyword id="KW-0021">Allosteric enzyme</keyword>
<keyword id="KW-0067">ATP-binding</keyword>
<keyword id="KW-0418">Kinase</keyword>
<keyword id="KW-0547">Nucleotide-binding</keyword>
<keyword id="KW-0808">Transferase</keyword>
<evidence type="ECO:0000255" key="1">
    <source>
        <dbReference type="HAMAP-Rule" id="MF_00602"/>
    </source>
</evidence>
<sequence>MSLDKIMNEAISPWMKGDGPDSDIVLSSRIRLARNFKKYQFSTMQNEEEAKQIQELFKKEFINKTVEPFGEFELLKMNELTPLQRRVLVEKHLISPNLAGTEYGACLLSENEHISVMLNEEDHIRIQCLFSGLQLSEALQSANQIDNWIEKEVEYAFDESLGYITSCPTNVGTGLRASVMIHLPGLVLTKRISRIIQVIQKLGLVVRGIYGEGSEALGNIFQVSNQMTLGKSEEDIIADLKSVIQQIIQQEKMARELIVQNSSIELEDKVYRSYGILANSRLIQSAEAANCLSDLRLGIDLGYIKGISRNILTELMVLTQPGILQQYAGGPLGPEERDYRRATLIRERLRIEKN</sequence>
<accession>B9IZG5</accession>
<protein>
    <recommendedName>
        <fullName evidence="1">Protein-arginine kinase</fullName>
        <ecNumber evidence="1">2.7.14.1</ecNumber>
    </recommendedName>
</protein>
<name>MCSB_BACCQ</name>
<proteinExistence type="inferred from homology"/>
<reference key="1">
    <citation type="journal article" date="2009" name="J. Bacteriol.">
        <title>Complete genome sequence of the extremophilic Bacillus cereus strain Q1 with industrial applications.</title>
        <authorList>
            <person name="Xiong Z."/>
            <person name="Jiang Y."/>
            <person name="Qi D."/>
            <person name="Lu H."/>
            <person name="Yang F."/>
            <person name="Yang J."/>
            <person name="Chen L."/>
            <person name="Sun L."/>
            <person name="Xu X."/>
            <person name="Xue Y."/>
            <person name="Zhu Y."/>
            <person name="Jin Q."/>
        </authorList>
    </citation>
    <scope>NUCLEOTIDE SEQUENCE [LARGE SCALE GENOMIC DNA]</scope>
    <source>
        <strain>Q1</strain>
    </source>
</reference>